<accession>P68771</accession>
<accession>P82590</accession>
<accession>Q48WI8</accession>
<accession>Q99XY7</accession>
<dbReference type="EC" id="3.5.1.88" evidence="1"/>
<dbReference type="EMBL" id="AE004092">
    <property type="protein sequence ID" value="AAK34651.1"/>
    <property type="molecule type" value="Genomic_DNA"/>
</dbReference>
<dbReference type="EMBL" id="CP000017">
    <property type="protein sequence ID" value="AAZ52287.1"/>
    <property type="molecule type" value="Genomic_DNA"/>
</dbReference>
<dbReference type="RefSeq" id="NP_269930.1">
    <property type="nucleotide sequence ID" value="NC_002737.2"/>
</dbReference>
<dbReference type="PDB" id="2OS3">
    <property type="method" value="X-ray"/>
    <property type="resolution" value="2.26 A"/>
    <property type="chains" value="A=2-204"/>
</dbReference>
<dbReference type="PDBsum" id="2OS3"/>
<dbReference type="SMR" id="P68771"/>
<dbReference type="DrugBank" id="DB04310">
    <property type="generic name" value="2-[(Formyl-Hydroxy-Amino)-Methyl]-Heptanoic Acid [1-(2-Hydroxymethyl-Pyrrolidine-1-Carbonyl)-2-Methyl-Propyl]-Amide"/>
</dbReference>
<dbReference type="PaxDb" id="1314-HKU360_01786"/>
<dbReference type="KEGG" id="spy:SPy_1958"/>
<dbReference type="KEGG" id="spz:M5005_Spy1669"/>
<dbReference type="PATRIC" id="fig|160490.10.peg.1705"/>
<dbReference type="HOGENOM" id="CLU_061901_4_0_9"/>
<dbReference type="OMA" id="HLYYDHI"/>
<dbReference type="EvolutionaryTrace" id="P68771"/>
<dbReference type="Proteomes" id="UP000000750">
    <property type="component" value="Chromosome"/>
</dbReference>
<dbReference type="GO" id="GO:0046872">
    <property type="term" value="F:metal ion binding"/>
    <property type="evidence" value="ECO:0007669"/>
    <property type="project" value="UniProtKB-KW"/>
</dbReference>
<dbReference type="GO" id="GO:0042586">
    <property type="term" value="F:peptide deformylase activity"/>
    <property type="evidence" value="ECO:0007669"/>
    <property type="project" value="UniProtKB-UniRule"/>
</dbReference>
<dbReference type="GO" id="GO:0043686">
    <property type="term" value="P:co-translational protein modification"/>
    <property type="evidence" value="ECO:0007669"/>
    <property type="project" value="TreeGrafter"/>
</dbReference>
<dbReference type="GO" id="GO:0006412">
    <property type="term" value="P:translation"/>
    <property type="evidence" value="ECO:0007669"/>
    <property type="project" value="UniProtKB-UniRule"/>
</dbReference>
<dbReference type="CDD" id="cd00487">
    <property type="entry name" value="Pep_deformylase"/>
    <property type="match status" value="1"/>
</dbReference>
<dbReference type="FunFam" id="3.90.45.10:FF:000002">
    <property type="entry name" value="Peptide deformylase"/>
    <property type="match status" value="1"/>
</dbReference>
<dbReference type="Gene3D" id="3.90.45.10">
    <property type="entry name" value="Peptide deformylase"/>
    <property type="match status" value="1"/>
</dbReference>
<dbReference type="HAMAP" id="MF_00163">
    <property type="entry name" value="Pep_deformylase"/>
    <property type="match status" value="1"/>
</dbReference>
<dbReference type="InterPro" id="IPR023635">
    <property type="entry name" value="Peptide_deformylase"/>
</dbReference>
<dbReference type="InterPro" id="IPR036821">
    <property type="entry name" value="Peptide_deformylase_sf"/>
</dbReference>
<dbReference type="NCBIfam" id="TIGR00079">
    <property type="entry name" value="pept_deformyl"/>
    <property type="match status" value="1"/>
</dbReference>
<dbReference type="PANTHER" id="PTHR10458">
    <property type="entry name" value="PEPTIDE DEFORMYLASE"/>
    <property type="match status" value="1"/>
</dbReference>
<dbReference type="PANTHER" id="PTHR10458:SF8">
    <property type="entry name" value="PEPTIDE DEFORMYLASE 2"/>
    <property type="match status" value="1"/>
</dbReference>
<dbReference type="Pfam" id="PF01327">
    <property type="entry name" value="Pep_deformylase"/>
    <property type="match status" value="1"/>
</dbReference>
<dbReference type="PIRSF" id="PIRSF004749">
    <property type="entry name" value="Pep_def"/>
    <property type="match status" value="1"/>
</dbReference>
<dbReference type="PRINTS" id="PR01576">
    <property type="entry name" value="PDEFORMYLASE"/>
</dbReference>
<dbReference type="SUPFAM" id="SSF56420">
    <property type="entry name" value="Peptide deformylase"/>
    <property type="match status" value="1"/>
</dbReference>
<comment type="function">
    <text evidence="1">Removes the formyl group from the N-terminal Met of newly synthesized proteins. Requires at least a dipeptide for an efficient rate of reaction. N-terminal L-methionine is a prerequisite for activity but the enzyme has broad specificity at other positions.</text>
</comment>
<comment type="catalytic activity">
    <reaction evidence="1">
        <text>N-terminal N-formyl-L-methionyl-[peptide] + H2O = N-terminal L-methionyl-[peptide] + formate</text>
        <dbReference type="Rhea" id="RHEA:24420"/>
        <dbReference type="Rhea" id="RHEA-COMP:10639"/>
        <dbReference type="Rhea" id="RHEA-COMP:10640"/>
        <dbReference type="ChEBI" id="CHEBI:15377"/>
        <dbReference type="ChEBI" id="CHEBI:15740"/>
        <dbReference type="ChEBI" id="CHEBI:49298"/>
        <dbReference type="ChEBI" id="CHEBI:64731"/>
        <dbReference type="EC" id="3.5.1.88"/>
    </reaction>
</comment>
<comment type="cofactor">
    <cofactor evidence="1">
        <name>Fe(2+)</name>
        <dbReference type="ChEBI" id="CHEBI:29033"/>
    </cofactor>
    <text evidence="1">Binds 1 Fe(2+) ion.</text>
</comment>
<comment type="similarity">
    <text evidence="1">Belongs to the polypeptide deformylase family.</text>
</comment>
<proteinExistence type="evidence at protein level"/>
<reference key="1">
    <citation type="journal article" date="2001" name="Proc. Natl. Acad. Sci. U.S.A.">
        <title>Complete genome sequence of an M1 strain of Streptococcus pyogenes.</title>
        <authorList>
            <person name="Ferretti J.J."/>
            <person name="McShan W.M."/>
            <person name="Ajdic D.J."/>
            <person name="Savic D.J."/>
            <person name="Savic G."/>
            <person name="Lyon K."/>
            <person name="Primeaux C."/>
            <person name="Sezate S."/>
            <person name="Suvorov A.N."/>
            <person name="Kenton S."/>
            <person name="Lai H.S."/>
            <person name="Lin S.P."/>
            <person name="Qian Y."/>
            <person name="Jia H.G."/>
            <person name="Najar F.Z."/>
            <person name="Ren Q."/>
            <person name="Zhu H."/>
            <person name="Song L."/>
            <person name="White J."/>
            <person name="Yuan X."/>
            <person name="Clifton S.W."/>
            <person name="Roe B.A."/>
            <person name="McLaughlin R.E."/>
        </authorList>
    </citation>
    <scope>NUCLEOTIDE SEQUENCE [LARGE SCALE GENOMIC DNA]</scope>
    <source>
        <strain>ATCC 700294 / SF370 / Serotype M1</strain>
    </source>
</reference>
<reference key="2">
    <citation type="journal article" date="2005" name="J. Infect. Dis.">
        <title>Evolutionary origin and emergence of a highly successful clone of serotype M1 group A Streptococcus involved multiple horizontal gene transfer events.</title>
        <authorList>
            <person name="Sumby P."/>
            <person name="Porcella S.F."/>
            <person name="Madrigal A.G."/>
            <person name="Barbian K.D."/>
            <person name="Virtaneva K."/>
            <person name="Ricklefs S.M."/>
            <person name="Sturdevant D.E."/>
            <person name="Graham M.R."/>
            <person name="Vuopio-Varkila J."/>
            <person name="Hoe N.P."/>
            <person name="Musser J.M."/>
        </authorList>
    </citation>
    <scope>NUCLEOTIDE SEQUENCE [LARGE SCALE GENOMIC DNA]</scope>
    <source>
        <strain>ATCC BAA-947 / MGAS5005 / Serotype M1</strain>
    </source>
</reference>
<name>DEF_STRP1</name>
<evidence type="ECO:0000255" key="1">
    <source>
        <dbReference type="HAMAP-Rule" id="MF_00163"/>
    </source>
</evidence>
<evidence type="ECO:0007829" key="2">
    <source>
        <dbReference type="PDB" id="2OS3"/>
    </source>
</evidence>
<protein>
    <recommendedName>
        <fullName evidence="1">Peptide deformylase</fullName>
        <shortName evidence="1">PDF</shortName>
        <ecNumber evidence="1">3.5.1.88</ecNumber>
    </recommendedName>
    <alternativeName>
        <fullName evidence="1">Polypeptide deformylase</fullName>
    </alternativeName>
</protein>
<sequence length="204" mass="22862">MSAQDKLIKPSHLITMDDIIREGNPTLRAVAKEVSLPLCDEDILLGEKMMQFLKHSQDPVMAEKLGLRAGVGLAAPQIDVSKRIIAVLVPNLPDKEGNPPKEAYSWQEVLYNPKIVSHSVQDAALSDGEGCLSVDRVVEGYVVRHARVTVDYYDKEGQQHRIKLKGYNAIVVQHEIDHINGVLFYDRINAKNPFETKEELLILD</sequence>
<gene>
    <name evidence="1" type="primary">def</name>
    <name type="ordered locus">SPy_1958</name>
    <name type="ordered locus">M5005_Spy1669</name>
</gene>
<feature type="chain" id="PRO_0000082859" description="Peptide deformylase">
    <location>
        <begin position="1"/>
        <end position="204"/>
    </location>
</feature>
<feature type="active site" evidence="1">
    <location>
        <position position="175"/>
    </location>
</feature>
<feature type="binding site" evidence="1">
    <location>
        <position position="131"/>
    </location>
    <ligand>
        <name>Fe cation</name>
        <dbReference type="ChEBI" id="CHEBI:24875"/>
    </ligand>
</feature>
<feature type="binding site" evidence="1">
    <location>
        <position position="174"/>
    </location>
    <ligand>
        <name>Fe cation</name>
        <dbReference type="ChEBI" id="CHEBI:24875"/>
    </ligand>
</feature>
<feature type="binding site" evidence="1">
    <location>
        <position position="178"/>
    </location>
    <ligand>
        <name>Fe cation</name>
        <dbReference type="ChEBI" id="CHEBI:24875"/>
    </ligand>
</feature>
<feature type="helix" evidence="2">
    <location>
        <begin position="3"/>
        <end position="7"/>
    </location>
</feature>
<feature type="helix" evidence="2">
    <location>
        <begin position="16"/>
        <end position="18"/>
    </location>
</feature>
<feature type="helix" evidence="2">
    <location>
        <begin position="25"/>
        <end position="28"/>
    </location>
</feature>
<feature type="helix" evidence="2">
    <location>
        <begin position="40"/>
        <end position="56"/>
    </location>
</feature>
<feature type="helix" evidence="2">
    <location>
        <begin position="59"/>
        <end position="65"/>
    </location>
</feature>
<feature type="strand" evidence="2">
    <location>
        <begin position="71"/>
        <end position="74"/>
    </location>
</feature>
<feature type="helix" evidence="2">
    <location>
        <begin position="75"/>
        <end position="78"/>
    </location>
</feature>
<feature type="strand" evidence="2">
    <location>
        <begin position="82"/>
        <end position="90"/>
    </location>
</feature>
<feature type="strand" evidence="2">
    <location>
        <begin position="101"/>
        <end position="118"/>
    </location>
</feature>
<feature type="strand" evidence="2">
    <location>
        <begin position="120"/>
        <end position="125"/>
    </location>
</feature>
<feature type="strand" evidence="2">
    <location>
        <begin position="144"/>
        <end position="153"/>
    </location>
</feature>
<feature type="strand" evidence="2">
    <location>
        <begin position="159"/>
        <end position="164"/>
    </location>
</feature>
<feature type="helix" evidence="2">
    <location>
        <begin position="166"/>
        <end position="178"/>
    </location>
</feature>
<feature type="turn" evidence="2">
    <location>
        <begin position="179"/>
        <end position="181"/>
    </location>
</feature>
<feature type="helix" evidence="2">
    <location>
        <begin position="184"/>
        <end position="187"/>
    </location>
</feature>
<feature type="strand" evidence="2">
    <location>
        <begin position="200"/>
        <end position="203"/>
    </location>
</feature>
<keyword id="KW-0002">3D-structure</keyword>
<keyword id="KW-0378">Hydrolase</keyword>
<keyword id="KW-0408">Iron</keyword>
<keyword id="KW-0479">Metal-binding</keyword>
<keyword id="KW-0648">Protein biosynthesis</keyword>
<keyword id="KW-1185">Reference proteome</keyword>
<organism>
    <name type="scientific">Streptococcus pyogenes serotype M1</name>
    <dbReference type="NCBI Taxonomy" id="301447"/>
    <lineage>
        <taxon>Bacteria</taxon>
        <taxon>Bacillati</taxon>
        <taxon>Bacillota</taxon>
        <taxon>Bacilli</taxon>
        <taxon>Lactobacillales</taxon>
        <taxon>Streptococcaceae</taxon>
        <taxon>Streptococcus</taxon>
    </lineage>
</organism>